<sequence>MKVVEVKHPLVKHKLGLMRSADINTKDFRALATEVGSLLTYEAATDLETELVEIDGWCGKVEVERIKGKKVTVVPILRAGLGMMDGVLEHIPSARISVVGIYRDEETLEPVPYFTKLANDVEERLAIIVDPMLATGGSMIATIDLLKKSGCKHIKVLVLVAAPEGINALQAAHPDIELFTASIDSHLNQHGYIVPGLGDAGDKIFGTK</sequence>
<dbReference type="EC" id="2.4.2.9" evidence="1"/>
<dbReference type="EMBL" id="AE017143">
    <property type="protein sequence ID" value="AAP96029.1"/>
    <property type="molecule type" value="Genomic_DNA"/>
</dbReference>
<dbReference type="RefSeq" id="WP_010945078.1">
    <property type="nucleotide sequence ID" value="NC_002940.2"/>
</dbReference>
<dbReference type="SMR" id="Q7VM34"/>
<dbReference type="STRING" id="233412.HD_1178"/>
<dbReference type="KEGG" id="hdu:HD_1178"/>
<dbReference type="eggNOG" id="COG0035">
    <property type="taxonomic scope" value="Bacteria"/>
</dbReference>
<dbReference type="HOGENOM" id="CLU_067096_2_2_6"/>
<dbReference type="OrthoDB" id="9781675at2"/>
<dbReference type="UniPathway" id="UPA00574">
    <property type="reaction ID" value="UER00636"/>
</dbReference>
<dbReference type="Proteomes" id="UP000001022">
    <property type="component" value="Chromosome"/>
</dbReference>
<dbReference type="GO" id="GO:0005525">
    <property type="term" value="F:GTP binding"/>
    <property type="evidence" value="ECO:0007669"/>
    <property type="project" value="UniProtKB-KW"/>
</dbReference>
<dbReference type="GO" id="GO:0000287">
    <property type="term" value="F:magnesium ion binding"/>
    <property type="evidence" value="ECO:0007669"/>
    <property type="project" value="UniProtKB-UniRule"/>
</dbReference>
<dbReference type="GO" id="GO:0004845">
    <property type="term" value="F:uracil phosphoribosyltransferase activity"/>
    <property type="evidence" value="ECO:0007669"/>
    <property type="project" value="UniProtKB-UniRule"/>
</dbReference>
<dbReference type="GO" id="GO:0044206">
    <property type="term" value="P:UMP salvage"/>
    <property type="evidence" value="ECO:0007669"/>
    <property type="project" value="UniProtKB-UniRule"/>
</dbReference>
<dbReference type="GO" id="GO:0006223">
    <property type="term" value="P:uracil salvage"/>
    <property type="evidence" value="ECO:0007669"/>
    <property type="project" value="InterPro"/>
</dbReference>
<dbReference type="CDD" id="cd06223">
    <property type="entry name" value="PRTases_typeI"/>
    <property type="match status" value="1"/>
</dbReference>
<dbReference type="FunFam" id="3.40.50.2020:FF:000003">
    <property type="entry name" value="Uracil phosphoribosyltransferase"/>
    <property type="match status" value="1"/>
</dbReference>
<dbReference type="Gene3D" id="3.40.50.2020">
    <property type="match status" value="1"/>
</dbReference>
<dbReference type="HAMAP" id="MF_01218_B">
    <property type="entry name" value="Upp_B"/>
    <property type="match status" value="1"/>
</dbReference>
<dbReference type="InterPro" id="IPR000836">
    <property type="entry name" value="PRibTrfase_dom"/>
</dbReference>
<dbReference type="InterPro" id="IPR029057">
    <property type="entry name" value="PRTase-like"/>
</dbReference>
<dbReference type="InterPro" id="IPR034332">
    <property type="entry name" value="Upp_B"/>
</dbReference>
<dbReference type="InterPro" id="IPR050054">
    <property type="entry name" value="UPRTase/APRTase"/>
</dbReference>
<dbReference type="InterPro" id="IPR005765">
    <property type="entry name" value="Ura_phspho_trans"/>
</dbReference>
<dbReference type="NCBIfam" id="NF001097">
    <property type="entry name" value="PRK00129.1"/>
    <property type="match status" value="1"/>
</dbReference>
<dbReference type="NCBIfam" id="TIGR01091">
    <property type="entry name" value="upp"/>
    <property type="match status" value="1"/>
</dbReference>
<dbReference type="PANTHER" id="PTHR32315">
    <property type="entry name" value="ADENINE PHOSPHORIBOSYLTRANSFERASE"/>
    <property type="match status" value="1"/>
</dbReference>
<dbReference type="PANTHER" id="PTHR32315:SF4">
    <property type="entry name" value="URACIL PHOSPHORIBOSYLTRANSFERASE, CHLOROPLASTIC"/>
    <property type="match status" value="1"/>
</dbReference>
<dbReference type="Pfam" id="PF14681">
    <property type="entry name" value="UPRTase"/>
    <property type="match status" value="1"/>
</dbReference>
<dbReference type="SUPFAM" id="SSF53271">
    <property type="entry name" value="PRTase-like"/>
    <property type="match status" value="1"/>
</dbReference>
<name>UPP_HAEDU</name>
<reference key="1">
    <citation type="submission" date="2003-06" db="EMBL/GenBank/DDBJ databases">
        <title>The complete genome sequence of Haemophilus ducreyi.</title>
        <authorList>
            <person name="Munson R.S. Jr."/>
            <person name="Ray W.C."/>
            <person name="Mahairas G."/>
            <person name="Sabo P."/>
            <person name="Mungur R."/>
            <person name="Johnson L."/>
            <person name="Nguyen D."/>
            <person name="Wang J."/>
            <person name="Forst C."/>
            <person name="Hood L."/>
        </authorList>
    </citation>
    <scope>NUCLEOTIDE SEQUENCE [LARGE SCALE GENOMIC DNA]</scope>
    <source>
        <strain>35000HP / ATCC 700724</strain>
    </source>
</reference>
<keyword id="KW-0021">Allosteric enzyme</keyword>
<keyword id="KW-0328">Glycosyltransferase</keyword>
<keyword id="KW-0342">GTP-binding</keyword>
<keyword id="KW-0460">Magnesium</keyword>
<keyword id="KW-0547">Nucleotide-binding</keyword>
<keyword id="KW-1185">Reference proteome</keyword>
<keyword id="KW-0808">Transferase</keyword>
<protein>
    <recommendedName>
        <fullName evidence="1">Uracil phosphoribosyltransferase</fullName>
        <ecNumber evidence="1">2.4.2.9</ecNumber>
    </recommendedName>
    <alternativeName>
        <fullName evidence="1">UMP pyrophosphorylase</fullName>
    </alternativeName>
    <alternativeName>
        <fullName evidence="1">UPRTase</fullName>
    </alternativeName>
</protein>
<evidence type="ECO:0000255" key="1">
    <source>
        <dbReference type="HAMAP-Rule" id="MF_01218"/>
    </source>
</evidence>
<proteinExistence type="inferred from homology"/>
<organism>
    <name type="scientific">Haemophilus ducreyi (strain 35000HP / ATCC 700724)</name>
    <dbReference type="NCBI Taxonomy" id="233412"/>
    <lineage>
        <taxon>Bacteria</taxon>
        <taxon>Pseudomonadati</taxon>
        <taxon>Pseudomonadota</taxon>
        <taxon>Gammaproteobacteria</taxon>
        <taxon>Pasteurellales</taxon>
        <taxon>Pasteurellaceae</taxon>
        <taxon>Haemophilus</taxon>
    </lineage>
</organism>
<accession>Q7VM34</accession>
<feature type="chain" id="PRO_0000120833" description="Uracil phosphoribosyltransferase">
    <location>
        <begin position="1"/>
        <end position="208"/>
    </location>
</feature>
<feature type="binding site" evidence="1">
    <location>
        <position position="78"/>
    </location>
    <ligand>
        <name>5-phospho-alpha-D-ribose 1-diphosphate</name>
        <dbReference type="ChEBI" id="CHEBI:58017"/>
    </ligand>
</feature>
<feature type="binding site" evidence="1">
    <location>
        <position position="103"/>
    </location>
    <ligand>
        <name>5-phospho-alpha-D-ribose 1-diphosphate</name>
        <dbReference type="ChEBI" id="CHEBI:58017"/>
    </ligand>
</feature>
<feature type="binding site" evidence="1">
    <location>
        <begin position="130"/>
        <end position="138"/>
    </location>
    <ligand>
        <name>5-phospho-alpha-D-ribose 1-diphosphate</name>
        <dbReference type="ChEBI" id="CHEBI:58017"/>
    </ligand>
</feature>
<feature type="binding site" evidence="1">
    <location>
        <position position="193"/>
    </location>
    <ligand>
        <name>uracil</name>
        <dbReference type="ChEBI" id="CHEBI:17568"/>
    </ligand>
</feature>
<feature type="binding site" evidence="1">
    <location>
        <begin position="198"/>
        <end position="200"/>
    </location>
    <ligand>
        <name>uracil</name>
        <dbReference type="ChEBI" id="CHEBI:17568"/>
    </ligand>
</feature>
<feature type="binding site" evidence="1">
    <location>
        <position position="199"/>
    </location>
    <ligand>
        <name>5-phospho-alpha-D-ribose 1-diphosphate</name>
        <dbReference type="ChEBI" id="CHEBI:58017"/>
    </ligand>
</feature>
<comment type="function">
    <text evidence="1">Catalyzes the conversion of uracil and 5-phospho-alpha-D-ribose 1-diphosphate (PRPP) to UMP and diphosphate.</text>
</comment>
<comment type="catalytic activity">
    <reaction evidence="1">
        <text>UMP + diphosphate = 5-phospho-alpha-D-ribose 1-diphosphate + uracil</text>
        <dbReference type="Rhea" id="RHEA:13017"/>
        <dbReference type="ChEBI" id="CHEBI:17568"/>
        <dbReference type="ChEBI" id="CHEBI:33019"/>
        <dbReference type="ChEBI" id="CHEBI:57865"/>
        <dbReference type="ChEBI" id="CHEBI:58017"/>
        <dbReference type="EC" id="2.4.2.9"/>
    </reaction>
</comment>
<comment type="cofactor">
    <cofactor evidence="1">
        <name>Mg(2+)</name>
        <dbReference type="ChEBI" id="CHEBI:18420"/>
    </cofactor>
    <text evidence="1">Binds 1 Mg(2+) ion per subunit. The magnesium is bound as Mg-PRPP.</text>
</comment>
<comment type="activity regulation">
    <text evidence="1">Allosterically activated by GTP.</text>
</comment>
<comment type="pathway">
    <text evidence="1">Pyrimidine metabolism; UMP biosynthesis via salvage pathway; UMP from uracil: step 1/1.</text>
</comment>
<comment type="similarity">
    <text evidence="1">Belongs to the UPRTase family.</text>
</comment>
<gene>
    <name evidence="1" type="primary">upp</name>
    <name type="ordered locus">HD_1178</name>
</gene>